<organism>
    <name type="scientific">Clostridium botulinum (strain Kyoto / Type A2)</name>
    <dbReference type="NCBI Taxonomy" id="536232"/>
    <lineage>
        <taxon>Bacteria</taxon>
        <taxon>Bacillati</taxon>
        <taxon>Bacillota</taxon>
        <taxon>Clostridia</taxon>
        <taxon>Eubacteriales</taxon>
        <taxon>Clostridiaceae</taxon>
        <taxon>Clostridium</taxon>
    </lineage>
</organism>
<accession>C1FS97</accession>
<name>PANB_CLOBJ</name>
<proteinExistence type="inferred from homology"/>
<keyword id="KW-0963">Cytoplasm</keyword>
<keyword id="KW-0460">Magnesium</keyword>
<keyword id="KW-0479">Metal-binding</keyword>
<keyword id="KW-0566">Pantothenate biosynthesis</keyword>
<keyword id="KW-0808">Transferase</keyword>
<reference key="1">
    <citation type="submission" date="2008-10" db="EMBL/GenBank/DDBJ databases">
        <title>Genome sequence of Clostridium botulinum A2 Kyoto.</title>
        <authorList>
            <person name="Shrivastava S."/>
            <person name="Brinkac L.M."/>
            <person name="Brown J.L."/>
            <person name="Bruce D."/>
            <person name="Detter C.C."/>
            <person name="Johnson E.A."/>
            <person name="Munk C.A."/>
            <person name="Smith L.A."/>
            <person name="Smith T.J."/>
            <person name="Sutton G."/>
            <person name="Brettin T.S."/>
        </authorList>
    </citation>
    <scope>NUCLEOTIDE SEQUENCE [LARGE SCALE GENOMIC DNA]</scope>
    <source>
        <strain>Kyoto / Type A2</strain>
    </source>
</reference>
<comment type="function">
    <text evidence="1">Catalyzes the reversible reaction in which hydroxymethyl group from 5,10-methylenetetrahydrofolate is transferred onto alpha-ketoisovalerate to form ketopantoate.</text>
</comment>
<comment type="catalytic activity">
    <reaction evidence="1">
        <text>3-methyl-2-oxobutanoate + (6R)-5,10-methylene-5,6,7,8-tetrahydrofolate + H2O = 2-dehydropantoate + (6S)-5,6,7,8-tetrahydrofolate</text>
        <dbReference type="Rhea" id="RHEA:11824"/>
        <dbReference type="ChEBI" id="CHEBI:11561"/>
        <dbReference type="ChEBI" id="CHEBI:11851"/>
        <dbReference type="ChEBI" id="CHEBI:15377"/>
        <dbReference type="ChEBI" id="CHEBI:15636"/>
        <dbReference type="ChEBI" id="CHEBI:57453"/>
        <dbReference type="EC" id="2.1.2.11"/>
    </reaction>
</comment>
<comment type="cofactor">
    <cofactor evidence="1">
        <name>Mg(2+)</name>
        <dbReference type="ChEBI" id="CHEBI:18420"/>
    </cofactor>
    <text evidence="1">Binds 1 Mg(2+) ion per subunit.</text>
</comment>
<comment type="pathway">
    <text evidence="1">Cofactor biosynthesis; (R)-pantothenate biosynthesis; (R)-pantoate from 3-methyl-2-oxobutanoate: step 1/2.</text>
</comment>
<comment type="subunit">
    <text evidence="1">Homodecamer; pentamer of dimers.</text>
</comment>
<comment type="subcellular location">
    <subcellularLocation>
        <location evidence="1">Cytoplasm</location>
    </subcellularLocation>
</comment>
<comment type="similarity">
    <text evidence="1">Belongs to the PanB family.</text>
</comment>
<evidence type="ECO:0000255" key="1">
    <source>
        <dbReference type="HAMAP-Rule" id="MF_00156"/>
    </source>
</evidence>
<gene>
    <name evidence="1" type="primary">panB</name>
    <name type="ordered locus">CLM_0505</name>
</gene>
<dbReference type="EC" id="2.1.2.11" evidence="1"/>
<dbReference type="EMBL" id="CP001581">
    <property type="protein sequence ID" value="ACO84155.1"/>
    <property type="molecule type" value="Genomic_DNA"/>
</dbReference>
<dbReference type="RefSeq" id="WP_003356105.1">
    <property type="nucleotide sequence ID" value="NC_012563.1"/>
</dbReference>
<dbReference type="SMR" id="C1FS97"/>
<dbReference type="GeneID" id="5184680"/>
<dbReference type="KEGG" id="cby:CLM_0505"/>
<dbReference type="eggNOG" id="COG0413">
    <property type="taxonomic scope" value="Bacteria"/>
</dbReference>
<dbReference type="HOGENOM" id="CLU_036645_1_0_9"/>
<dbReference type="UniPathway" id="UPA00028">
    <property type="reaction ID" value="UER00003"/>
</dbReference>
<dbReference type="Proteomes" id="UP000001374">
    <property type="component" value="Chromosome"/>
</dbReference>
<dbReference type="GO" id="GO:0005737">
    <property type="term" value="C:cytoplasm"/>
    <property type="evidence" value="ECO:0007669"/>
    <property type="project" value="UniProtKB-SubCell"/>
</dbReference>
<dbReference type="GO" id="GO:0003864">
    <property type="term" value="F:3-methyl-2-oxobutanoate hydroxymethyltransferase activity"/>
    <property type="evidence" value="ECO:0007669"/>
    <property type="project" value="UniProtKB-UniRule"/>
</dbReference>
<dbReference type="GO" id="GO:0000287">
    <property type="term" value="F:magnesium ion binding"/>
    <property type="evidence" value="ECO:0007669"/>
    <property type="project" value="TreeGrafter"/>
</dbReference>
<dbReference type="GO" id="GO:0015940">
    <property type="term" value="P:pantothenate biosynthetic process"/>
    <property type="evidence" value="ECO:0007669"/>
    <property type="project" value="UniProtKB-UniRule"/>
</dbReference>
<dbReference type="CDD" id="cd06557">
    <property type="entry name" value="KPHMT-like"/>
    <property type="match status" value="1"/>
</dbReference>
<dbReference type="FunFam" id="3.20.20.60:FF:000003">
    <property type="entry name" value="3-methyl-2-oxobutanoate hydroxymethyltransferase"/>
    <property type="match status" value="1"/>
</dbReference>
<dbReference type="Gene3D" id="3.20.20.60">
    <property type="entry name" value="Phosphoenolpyruvate-binding domains"/>
    <property type="match status" value="1"/>
</dbReference>
<dbReference type="HAMAP" id="MF_00156">
    <property type="entry name" value="PanB"/>
    <property type="match status" value="1"/>
</dbReference>
<dbReference type="InterPro" id="IPR003700">
    <property type="entry name" value="Pantoate_hydroxy_MeTrfase"/>
</dbReference>
<dbReference type="InterPro" id="IPR015813">
    <property type="entry name" value="Pyrv/PenolPyrv_kinase-like_dom"/>
</dbReference>
<dbReference type="InterPro" id="IPR040442">
    <property type="entry name" value="Pyrv_kinase-like_dom_sf"/>
</dbReference>
<dbReference type="NCBIfam" id="TIGR00222">
    <property type="entry name" value="panB"/>
    <property type="match status" value="1"/>
</dbReference>
<dbReference type="NCBIfam" id="NF001452">
    <property type="entry name" value="PRK00311.1"/>
    <property type="match status" value="1"/>
</dbReference>
<dbReference type="PANTHER" id="PTHR20881">
    <property type="entry name" value="3-METHYL-2-OXOBUTANOATE HYDROXYMETHYLTRANSFERASE"/>
    <property type="match status" value="1"/>
</dbReference>
<dbReference type="PANTHER" id="PTHR20881:SF0">
    <property type="entry name" value="3-METHYL-2-OXOBUTANOATE HYDROXYMETHYLTRANSFERASE"/>
    <property type="match status" value="1"/>
</dbReference>
<dbReference type="Pfam" id="PF02548">
    <property type="entry name" value="Pantoate_transf"/>
    <property type="match status" value="1"/>
</dbReference>
<dbReference type="PIRSF" id="PIRSF000388">
    <property type="entry name" value="Pantoate_hydroxy_MeTrfase"/>
    <property type="match status" value="1"/>
</dbReference>
<dbReference type="SUPFAM" id="SSF51621">
    <property type="entry name" value="Phosphoenolpyruvate/pyruvate domain"/>
    <property type="match status" value="1"/>
</dbReference>
<protein>
    <recommendedName>
        <fullName evidence="1">3-methyl-2-oxobutanoate hydroxymethyltransferase</fullName>
        <ecNumber evidence="1">2.1.2.11</ecNumber>
    </recommendedName>
    <alternativeName>
        <fullName evidence="1">Ketopantoate hydroxymethyltransferase</fullName>
        <shortName evidence="1">KPHMT</shortName>
    </alternativeName>
</protein>
<sequence>MRNTVSTFQELKNKGEKITMLTAYDYSMAKLIDSSGINGILVGDSLGMVCLGYENTLSVTMEDMLHHTKAVVRGTSNALVVGDMPFMSYQTSIYDAVYNAGRFIKEAGAHAVKLEGGATVAEEIKAIVKAQIPVMGHIGLTPQSVNMFGGFKVQGKNEKVAKKLIEDAKILEEAGAFSIVLECIPEKLSKIISESISIPTIGIGAGKYCDGQILVYQDMLSMFSDFKPKFVKSFGNIGESIKDGVSQYIKEVKEAKFPEEKHAFKIDDDVINKLY</sequence>
<feature type="chain" id="PRO_1000123377" description="3-methyl-2-oxobutanoate hydroxymethyltransferase">
    <location>
        <begin position="1"/>
        <end position="275"/>
    </location>
</feature>
<feature type="active site" description="Proton acceptor" evidence="1">
    <location>
        <position position="182"/>
    </location>
</feature>
<feature type="binding site" evidence="1">
    <location>
        <begin position="44"/>
        <end position="45"/>
    </location>
    <ligand>
        <name>3-methyl-2-oxobutanoate</name>
        <dbReference type="ChEBI" id="CHEBI:11851"/>
    </ligand>
</feature>
<feature type="binding site" evidence="1">
    <location>
        <position position="44"/>
    </location>
    <ligand>
        <name>Mg(2+)</name>
        <dbReference type="ChEBI" id="CHEBI:18420"/>
    </ligand>
</feature>
<feature type="binding site" evidence="1">
    <location>
        <position position="83"/>
    </location>
    <ligand>
        <name>3-methyl-2-oxobutanoate</name>
        <dbReference type="ChEBI" id="CHEBI:11851"/>
    </ligand>
</feature>
<feature type="binding site" evidence="1">
    <location>
        <position position="83"/>
    </location>
    <ligand>
        <name>Mg(2+)</name>
        <dbReference type="ChEBI" id="CHEBI:18420"/>
    </ligand>
</feature>
<feature type="binding site" evidence="1">
    <location>
        <position position="113"/>
    </location>
    <ligand>
        <name>3-methyl-2-oxobutanoate</name>
        <dbReference type="ChEBI" id="CHEBI:11851"/>
    </ligand>
</feature>
<feature type="binding site" evidence="1">
    <location>
        <position position="115"/>
    </location>
    <ligand>
        <name>Mg(2+)</name>
        <dbReference type="ChEBI" id="CHEBI:18420"/>
    </ligand>
</feature>